<organism>
    <name type="scientific">Rhipidomys leucodactylus</name>
    <name type="common">White-footed climbing mouse</name>
    <name type="synonym">Hesperomys leucodactylus</name>
    <dbReference type="NCBI Taxonomy" id="29129"/>
    <lineage>
        <taxon>Eukaryota</taxon>
        <taxon>Metazoa</taxon>
        <taxon>Chordata</taxon>
        <taxon>Craniata</taxon>
        <taxon>Vertebrata</taxon>
        <taxon>Euteleostomi</taxon>
        <taxon>Mammalia</taxon>
        <taxon>Eutheria</taxon>
        <taxon>Euarchontoglires</taxon>
        <taxon>Glires</taxon>
        <taxon>Rodentia</taxon>
        <taxon>Myomorpha</taxon>
        <taxon>Muroidea</taxon>
        <taxon>Cricetidae</taxon>
        <taxon>Sigmodontinae</taxon>
        <taxon>Rhipidomys</taxon>
    </lineage>
</organism>
<comment type="function">
    <text evidence="2">Component of the ubiquinol-cytochrome c reductase complex (complex III or cytochrome b-c1 complex) that is part of the mitochondrial respiratory chain. The b-c1 complex mediates electron transfer from ubiquinol to cytochrome c. Contributes to the generation of a proton gradient across the mitochondrial membrane that is then used for ATP synthesis.</text>
</comment>
<comment type="cofactor">
    <cofactor evidence="2">
        <name>heme b</name>
        <dbReference type="ChEBI" id="CHEBI:60344"/>
    </cofactor>
    <text evidence="2">Binds 2 heme b groups non-covalently.</text>
</comment>
<comment type="subunit">
    <text evidence="2">The cytochrome bc1 complex contains 11 subunits: 3 respiratory subunits (MT-CYB, CYC1 and UQCRFS1), 2 core proteins (UQCRC1 and UQCRC2) and 6 low-molecular weight proteins (UQCRH/QCR6, UQCRB/QCR7, UQCRQ/QCR8, UQCR10/QCR9, UQCR11/QCR10 and a cleavage product of UQCRFS1). This cytochrome bc1 complex then forms a dimer.</text>
</comment>
<comment type="subcellular location">
    <subcellularLocation>
        <location evidence="2">Mitochondrion inner membrane</location>
        <topology evidence="2">Multi-pass membrane protein</topology>
    </subcellularLocation>
</comment>
<comment type="miscellaneous">
    <text evidence="1">Heme 1 (or BL or b562) is low-potential and absorbs at about 562 nm, and heme 2 (or BH or b566) is high-potential and absorbs at about 566 nm.</text>
</comment>
<comment type="similarity">
    <text evidence="3 4">Belongs to the cytochrome b family.</text>
</comment>
<comment type="caution">
    <text evidence="2">The full-length protein contains only eight transmembrane helices, not nine as predicted by bioinformatics tools.</text>
</comment>
<name>CYB_RHILC</name>
<accession>Q35727</accession>
<feature type="chain" id="PRO_0000255127" description="Cytochrome b">
    <location>
        <begin position="1"/>
        <end position="380"/>
    </location>
</feature>
<feature type="transmembrane region" description="Helical" evidence="2">
    <location>
        <begin position="33"/>
        <end position="53"/>
    </location>
</feature>
<feature type="transmembrane region" description="Helical" evidence="2">
    <location>
        <begin position="77"/>
        <end position="98"/>
    </location>
</feature>
<feature type="transmembrane region" description="Helical" evidence="2">
    <location>
        <begin position="113"/>
        <end position="133"/>
    </location>
</feature>
<feature type="transmembrane region" description="Helical" evidence="2">
    <location>
        <begin position="178"/>
        <end position="198"/>
    </location>
</feature>
<feature type="transmembrane region" description="Helical" evidence="2">
    <location>
        <begin position="226"/>
        <end position="246"/>
    </location>
</feature>
<feature type="transmembrane region" description="Helical" evidence="2">
    <location>
        <begin position="288"/>
        <end position="308"/>
    </location>
</feature>
<feature type="transmembrane region" description="Helical" evidence="2">
    <location>
        <begin position="320"/>
        <end position="340"/>
    </location>
</feature>
<feature type="transmembrane region" description="Helical" evidence="2">
    <location>
        <begin position="347"/>
        <end position="367"/>
    </location>
</feature>
<feature type="binding site" description="axial binding residue" evidence="2">
    <location>
        <position position="83"/>
    </location>
    <ligand>
        <name>heme b</name>
        <dbReference type="ChEBI" id="CHEBI:60344"/>
        <label>b562</label>
    </ligand>
    <ligandPart>
        <name>Fe</name>
        <dbReference type="ChEBI" id="CHEBI:18248"/>
    </ligandPart>
</feature>
<feature type="binding site" description="axial binding residue" evidence="2">
    <location>
        <position position="97"/>
    </location>
    <ligand>
        <name>heme b</name>
        <dbReference type="ChEBI" id="CHEBI:60344"/>
        <label>b566</label>
    </ligand>
    <ligandPart>
        <name>Fe</name>
        <dbReference type="ChEBI" id="CHEBI:18248"/>
    </ligandPart>
</feature>
<feature type="binding site" description="axial binding residue" evidence="2">
    <location>
        <position position="182"/>
    </location>
    <ligand>
        <name>heme b</name>
        <dbReference type="ChEBI" id="CHEBI:60344"/>
        <label>b562</label>
    </ligand>
    <ligandPart>
        <name>Fe</name>
        <dbReference type="ChEBI" id="CHEBI:18248"/>
    </ligandPart>
</feature>
<feature type="binding site" description="axial binding residue" evidence="2">
    <location>
        <position position="196"/>
    </location>
    <ligand>
        <name>heme b</name>
        <dbReference type="ChEBI" id="CHEBI:60344"/>
        <label>b566</label>
    </ligand>
    <ligandPart>
        <name>Fe</name>
        <dbReference type="ChEBI" id="CHEBI:18248"/>
    </ligandPart>
</feature>
<feature type="binding site" evidence="2">
    <location>
        <position position="201"/>
    </location>
    <ligand>
        <name>a ubiquinone</name>
        <dbReference type="ChEBI" id="CHEBI:16389"/>
    </ligand>
</feature>
<reference key="1">
    <citation type="journal article" date="1999" name="J. Mammal. Evol.">
        <title>Phylogenetic relationships and the radiation of Sigmodontine rodents in South America: evidence from cytochrome b.</title>
        <authorList>
            <person name="Smith M.F."/>
            <person name="Patton J.L."/>
        </authorList>
    </citation>
    <scope>NUCLEOTIDE SEQUENCE [GENOMIC DNA]</scope>
    <source>
        <tissue>Liver</tissue>
    </source>
</reference>
<dbReference type="EMBL" id="U03550">
    <property type="protein sequence ID" value="AAD12576.2"/>
    <property type="molecule type" value="Genomic_DNA"/>
</dbReference>
<dbReference type="GO" id="GO:0005743">
    <property type="term" value="C:mitochondrial inner membrane"/>
    <property type="evidence" value="ECO:0007669"/>
    <property type="project" value="UniProtKB-SubCell"/>
</dbReference>
<dbReference type="GO" id="GO:0045275">
    <property type="term" value="C:respiratory chain complex III"/>
    <property type="evidence" value="ECO:0007669"/>
    <property type="project" value="InterPro"/>
</dbReference>
<dbReference type="GO" id="GO:0046872">
    <property type="term" value="F:metal ion binding"/>
    <property type="evidence" value="ECO:0007669"/>
    <property type="project" value="UniProtKB-KW"/>
</dbReference>
<dbReference type="GO" id="GO:0008121">
    <property type="term" value="F:ubiquinol-cytochrome-c reductase activity"/>
    <property type="evidence" value="ECO:0007669"/>
    <property type="project" value="InterPro"/>
</dbReference>
<dbReference type="GO" id="GO:0006122">
    <property type="term" value="P:mitochondrial electron transport, ubiquinol to cytochrome c"/>
    <property type="evidence" value="ECO:0007669"/>
    <property type="project" value="TreeGrafter"/>
</dbReference>
<dbReference type="CDD" id="cd00284">
    <property type="entry name" value="Cytochrome_b_N"/>
    <property type="match status" value="1"/>
</dbReference>
<dbReference type="FunFam" id="1.20.810.10:FF:000002">
    <property type="entry name" value="Cytochrome b"/>
    <property type="match status" value="1"/>
</dbReference>
<dbReference type="Gene3D" id="1.20.810.10">
    <property type="entry name" value="Cytochrome Bc1 Complex, Chain C"/>
    <property type="match status" value="1"/>
</dbReference>
<dbReference type="InterPro" id="IPR005798">
    <property type="entry name" value="Cyt_b/b6_C"/>
</dbReference>
<dbReference type="InterPro" id="IPR036150">
    <property type="entry name" value="Cyt_b/b6_C_sf"/>
</dbReference>
<dbReference type="InterPro" id="IPR005797">
    <property type="entry name" value="Cyt_b/b6_N"/>
</dbReference>
<dbReference type="InterPro" id="IPR027387">
    <property type="entry name" value="Cytb/b6-like_sf"/>
</dbReference>
<dbReference type="InterPro" id="IPR030689">
    <property type="entry name" value="Cytochrome_b"/>
</dbReference>
<dbReference type="InterPro" id="IPR048259">
    <property type="entry name" value="Cytochrome_b_N_euk/bac"/>
</dbReference>
<dbReference type="InterPro" id="IPR016174">
    <property type="entry name" value="Di-haem_cyt_TM"/>
</dbReference>
<dbReference type="PANTHER" id="PTHR19271">
    <property type="entry name" value="CYTOCHROME B"/>
    <property type="match status" value="1"/>
</dbReference>
<dbReference type="PANTHER" id="PTHR19271:SF16">
    <property type="entry name" value="CYTOCHROME B"/>
    <property type="match status" value="1"/>
</dbReference>
<dbReference type="Pfam" id="PF00032">
    <property type="entry name" value="Cytochrom_B_C"/>
    <property type="match status" value="1"/>
</dbReference>
<dbReference type="Pfam" id="PF00033">
    <property type="entry name" value="Cytochrome_B"/>
    <property type="match status" value="1"/>
</dbReference>
<dbReference type="PIRSF" id="PIRSF038885">
    <property type="entry name" value="COB"/>
    <property type="match status" value="1"/>
</dbReference>
<dbReference type="SUPFAM" id="SSF81648">
    <property type="entry name" value="a domain/subunit of cytochrome bc1 complex (Ubiquinol-cytochrome c reductase)"/>
    <property type="match status" value="1"/>
</dbReference>
<dbReference type="SUPFAM" id="SSF81342">
    <property type="entry name" value="Transmembrane di-heme cytochromes"/>
    <property type="match status" value="1"/>
</dbReference>
<dbReference type="PROSITE" id="PS51003">
    <property type="entry name" value="CYTB_CTER"/>
    <property type="match status" value="1"/>
</dbReference>
<dbReference type="PROSITE" id="PS51002">
    <property type="entry name" value="CYTB_NTER"/>
    <property type="match status" value="1"/>
</dbReference>
<geneLocation type="mitochondrion"/>
<sequence>MTIMRKKHPLLKMINHSFIDLPTPSNISSWWNFGSLLGVCLIIQILTGLFLAMHYTSDTTTAFSSVAHICRDVNYGWLIRYLHANGASMFFICLFIHVGRGIYYGSYMLLETWNIGIVLLLTTMATAFVGYVLPWGQMSFWGATVITNLLSAIPYIGNTLVEWIWGGFSVDKATLTRFFAFHFILPFIITALVLVHLLFLHETGSNNPSGLNSNSDKIPFHPYYTIKDLLGVLLLLMVLTILVLFFPDALGDPDNYTPANPLNTPAHXXXXXXXXXXXXXXXXIPNKLGGVXALXLSILILXXXPLLNSSKQHGLMYRPITQVLYWIFXXNLXXXXXXXXXXXXXXXXXXXQIASICYXAIIIIFMPXASMIENSMLKLH</sequence>
<gene>
    <name type="primary">MT-CYB</name>
    <name type="synonym">COB</name>
    <name type="synonym">CYTB</name>
    <name type="synonym">MTCYB</name>
</gene>
<evidence type="ECO:0000250" key="1"/>
<evidence type="ECO:0000250" key="2">
    <source>
        <dbReference type="UniProtKB" id="P00157"/>
    </source>
</evidence>
<evidence type="ECO:0000255" key="3">
    <source>
        <dbReference type="PROSITE-ProRule" id="PRU00967"/>
    </source>
</evidence>
<evidence type="ECO:0000255" key="4">
    <source>
        <dbReference type="PROSITE-ProRule" id="PRU00968"/>
    </source>
</evidence>
<keyword id="KW-0249">Electron transport</keyword>
<keyword id="KW-0349">Heme</keyword>
<keyword id="KW-0408">Iron</keyword>
<keyword id="KW-0472">Membrane</keyword>
<keyword id="KW-0479">Metal-binding</keyword>
<keyword id="KW-0496">Mitochondrion</keyword>
<keyword id="KW-0999">Mitochondrion inner membrane</keyword>
<keyword id="KW-0679">Respiratory chain</keyword>
<keyword id="KW-0812">Transmembrane</keyword>
<keyword id="KW-1133">Transmembrane helix</keyword>
<keyword id="KW-0813">Transport</keyword>
<keyword id="KW-0830">Ubiquinone</keyword>
<proteinExistence type="inferred from homology"/>
<protein>
    <recommendedName>
        <fullName>Cytochrome b</fullName>
    </recommendedName>
    <alternativeName>
        <fullName>Complex III subunit 3</fullName>
    </alternativeName>
    <alternativeName>
        <fullName>Complex III subunit III</fullName>
    </alternativeName>
    <alternativeName>
        <fullName>Cytochrome b-c1 complex subunit 3</fullName>
    </alternativeName>
    <alternativeName>
        <fullName>Ubiquinol-cytochrome-c reductase complex cytochrome b subunit</fullName>
    </alternativeName>
</protein>